<accession>Q9NQX0</accession>
<accession>B5MCJ4</accession>
<accession>Q9NQW9</accession>
<protein>
    <recommendedName>
        <fullName>Putative histone-lysine N-methyltransferase PRDM6</fullName>
        <ecNumber evidence="1">2.1.1.361</ecNumber>
    </recommendedName>
    <alternativeName>
        <fullName>PR domain zinc finger protein 6</fullName>
    </alternativeName>
    <alternativeName>
        <fullName>PR domain-containing protein 6</fullName>
    </alternativeName>
</protein>
<gene>
    <name type="primary">PRDM6</name>
    <name type="synonym">PFM3</name>
</gene>
<dbReference type="EC" id="2.1.1.361" evidence="1"/>
<dbReference type="EMBL" id="AF272898">
    <property type="protein sequence ID" value="AAF78078.1"/>
    <property type="status" value="ALT_INIT"/>
    <property type="molecule type" value="mRNA"/>
</dbReference>
<dbReference type="EMBL" id="AF272899">
    <property type="protein sequence ID" value="AAF78079.1"/>
    <property type="status" value="ALT_INIT"/>
    <property type="molecule type" value="mRNA"/>
</dbReference>
<dbReference type="EMBL" id="AC008548">
    <property type="status" value="NOT_ANNOTATED_CDS"/>
    <property type="molecule type" value="Genomic_DNA"/>
</dbReference>
<dbReference type="EMBL" id="AC106786">
    <property type="status" value="NOT_ANNOTATED_CDS"/>
    <property type="molecule type" value="Genomic_DNA"/>
</dbReference>
<dbReference type="CCDS" id="CCDS47259.1">
    <molecule id="Q9NQX0-3"/>
</dbReference>
<dbReference type="RefSeq" id="NP_001129711.1">
    <molecule id="Q9NQX0-3"/>
    <property type="nucleotide sequence ID" value="NM_001136239.4"/>
</dbReference>
<dbReference type="SMR" id="Q9NQX0"/>
<dbReference type="BioGRID" id="125009">
    <property type="interactions" value="86"/>
</dbReference>
<dbReference type="FunCoup" id="Q9NQX0">
    <property type="interactions" value="1463"/>
</dbReference>
<dbReference type="IntAct" id="Q9NQX0">
    <property type="interactions" value="73"/>
</dbReference>
<dbReference type="MINT" id="Q9NQX0"/>
<dbReference type="STRING" id="9606.ENSP00000384725"/>
<dbReference type="ChEMBL" id="CHEMBL5214858"/>
<dbReference type="GlyGen" id="Q9NQX0">
    <property type="glycosylation" value="2 sites, 1 N-linked glycan (1 site)"/>
</dbReference>
<dbReference type="iPTMnet" id="Q9NQX0"/>
<dbReference type="PhosphoSitePlus" id="Q9NQX0"/>
<dbReference type="BioMuta" id="PRDM6"/>
<dbReference type="DMDM" id="223590133"/>
<dbReference type="jPOST" id="Q9NQX0"/>
<dbReference type="MassIVE" id="Q9NQX0"/>
<dbReference type="PaxDb" id="9606-ENSP00000384725"/>
<dbReference type="PeptideAtlas" id="Q9NQX0"/>
<dbReference type="ProteomicsDB" id="82215">
    <molecule id="Q9NQX0-3"/>
</dbReference>
<dbReference type="ProteomicsDB" id="82216">
    <molecule id="Q9NQX0-1"/>
</dbReference>
<dbReference type="Pumba" id="Q9NQX0"/>
<dbReference type="Antibodypedia" id="25663">
    <property type="antibodies" value="108 antibodies from 17 providers"/>
</dbReference>
<dbReference type="DNASU" id="93166"/>
<dbReference type="Ensembl" id="ENST00000407847.5">
    <molecule id="Q9NQX0-3"/>
    <property type="protein sequence ID" value="ENSP00000384725.3"/>
    <property type="gene ID" value="ENSG00000061455.11"/>
</dbReference>
<dbReference type="GeneID" id="93166"/>
<dbReference type="KEGG" id="hsa:93166"/>
<dbReference type="MANE-Select" id="ENST00000407847.5">
    <property type="protein sequence ID" value="ENSP00000384725.3"/>
    <property type="RefSeq nucleotide sequence ID" value="NM_001136239.4"/>
    <property type="RefSeq protein sequence ID" value="NP_001129711.1"/>
</dbReference>
<dbReference type="UCSC" id="uc003kti.4">
    <molecule id="Q9NQX0-3"/>
    <property type="organism name" value="human"/>
</dbReference>
<dbReference type="AGR" id="HGNC:9350"/>
<dbReference type="CTD" id="93166"/>
<dbReference type="DisGeNET" id="93166"/>
<dbReference type="GeneCards" id="PRDM6"/>
<dbReference type="HGNC" id="HGNC:9350">
    <property type="gene designation" value="PRDM6"/>
</dbReference>
<dbReference type="HPA" id="ENSG00000061455">
    <property type="expression patterns" value="Tissue enhanced (intestine, urinary bladder)"/>
</dbReference>
<dbReference type="MalaCards" id="PRDM6"/>
<dbReference type="MIM" id="616982">
    <property type="type" value="gene"/>
</dbReference>
<dbReference type="MIM" id="617039">
    <property type="type" value="phenotype"/>
</dbReference>
<dbReference type="neXtProt" id="NX_Q9NQX0"/>
<dbReference type="OpenTargets" id="ENSG00000061455"/>
<dbReference type="Orphanet" id="466729">
    <property type="disease" value="Familial patent arterial duct"/>
</dbReference>
<dbReference type="PharmGKB" id="PA33718"/>
<dbReference type="VEuPathDB" id="HostDB:ENSG00000061455"/>
<dbReference type="eggNOG" id="KOG1721">
    <property type="taxonomic scope" value="Eukaryota"/>
</dbReference>
<dbReference type="eggNOG" id="KOG2461">
    <property type="taxonomic scope" value="Eukaryota"/>
</dbReference>
<dbReference type="GeneTree" id="ENSGT00940000155852"/>
<dbReference type="HOGENOM" id="CLU_032452_0_0_1"/>
<dbReference type="InParanoid" id="Q9NQX0"/>
<dbReference type="OMA" id="CADHRHG"/>
<dbReference type="OrthoDB" id="7734462at2759"/>
<dbReference type="PAN-GO" id="Q9NQX0">
    <property type="GO annotations" value="2 GO annotations based on evolutionary models"/>
</dbReference>
<dbReference type="PhylomeDB" id="Q9NQX0"/>
<dbReference type="TreeFam" id="TF106403"/>
<dbReference type="BioCyc" id="MetaCyc:HS00755-MONOMER"/>
<dbReference type="PathwayCommons" id="Q9NQX0"/>
<dbReference type="SignaLink" id="Q9NQX0"/>
<dbReference type="BioGRID-ORCS" id="93166">
    <property type="hits" value="24 hits in 1175 CRISPR screens"/>
</dbReference>
<dbReference type="GenomeRNAi" id="93166"/>
<dbReference type="Pharos" id="Q9NQX0">
    <property type="development level" value="Tbio"/>
</dbReference>
<dbReference type="PRO" id="PR:Q9NQX0"/>
<dbReference type="Proteomes" id="UP000005640">
    <property type="component" value="Chromosome 5"/>
</dbReference>
<dbReference type="RNAct" id="Q9NQX0">
    <property type="molecule type" value="protein"/>
</dbReference>
<dbReference type="Bgee" id="ENSG00000061455">
    <property type="expression patterns" value="Expressed in descending thoracic aorta and 124 other cell types or tissues"/>
</dbReference>
<dbReference type="ExpressionAtlas" id="Q9NQX0">
    <property type="expression patterns" value="baseline and differential"/>
</dbReference>
<dbReference type="GO" id="GO:0005634">
    <property type="term" value="C:nucleus"/>
    <property type="evidence" value="ECO:0000318"/>
    <property type="project" value="GO_Central"/>
</dbReference>
<dbReference type="GO" id="GO:0140944">
    <property type="term" value="F:histone H4K20 monomethyltransferase activity"/>
    <property type="evidence" value="ECO:0007669"/>
    <property type="project" value="UniProtKB-EC"/>
</dbReference>
<dbReference type="GO" id="GO:0042802">
    <property type="term" value="F:identical protein binding"/>
    <property type="evidence" value="ECO:0000353"/>
    <property type="project" value="IntAct"/>
</dbReference>
<dbReference type="GO" id="GO:0008270">
    <property type="term" value="F:zinc ion binding"/>
    <property type="evidence" value="ECO:0007669"/>
    <property type="project" value="UniProtKB-KW"/>
</dbReference>
<dbReference type="GO" id="GO:0032259">
    <property type="term" value="P:methylation"/>
    <property type="evidence" value="ECO:0007669"/>
    <property type="project" value="UniProtKB-KW"/>
</dbReference>
<dbReference type="GO" id="GO:0051151">
    <property type="term" value="P:negative regulation of smooth muscle cell differentiation"/>
    <property type="evidence" value="ECO:0007669"/>
    <property type="project" value="Ensembl"/>
</dbReference>
<dbReference type="GO" id="GO:0000122">
    <property type="term" value="P:negative regulation of transcription by RNA polymerase II"/>
    <property type="evidence" value="ECO:0000314"/>
    <property type="project" value="ARUK-UCL"/>
</dbReference>
<dbReference type="GO" id="GO:0022008">
    <property type="term" value="P:neurogenesis"/>
    <property type="evidence" value="ECO:0007669"/>
    <property type="project" value="Ensembl"/>
</dbReference>
<dbReference type="GO" id="GO:0010468">
    <property type="term" value="P:regulation of gene expression"/>
    <property type="evidence" value="ECO:0000318"/>
    <property type="project" value="GO_Central"/>
</dbReference>
<dbReference type="CDD" id="cd19191">
    <property type="entry name" value="PR-SET_PRDM6"/>
    <property type="match status" value="1"/>
</dbReference>
<dbReference type="FunFam" id="3.30.160.60:FF:000654">
    <property type="entry name" value="PR/SET domain 6"/>
    <property type="match status" value="1"/>
</dbReference>
<dbReference type="FunFam" id="3.30.160.60:FF:000778">
    <property type="entry name" value="PR/SET domain 6"/>
    <property type="match status" value="1"/>
</dbReference>
<dbReference type="FunFam" id="2.170.270.10:FF:000023">
    <property type="entry name" value="putative histone-lysine N-methyltransferase PRDM6"/>
    <property type="match status" value="1"/>
</dbReference>
<dbReference type="FunFam" id="3.30.160.60:FF:000868">
    <property type="entry name" value="putative histone-lysine N-methyltransferase PRDM6"/>
    <property type="match status" value="1"/>
</dbReference>
<dbReference type="Gene3D" id="3.30.160.60">
    <property type="entry name" value="Classic Zinc Finger"/>
    <property type="match status" value="3"/>
</dbReference>
<dbReference type="Gene3D" id="2.170.270.10">
    <property type="entry name" value="SET domain"/>
    <property type="match status" value="1"/>
</dbReference>
<dbReference type="InterPro" id="IPR044416">
    <property type="entry name" value="PRDM6_PR-SET"/>
</dbReference>
<dbReference type="InterPro" id="IPR001214">
    <property type="entry name" value="SET_dom"/>
</dbReference>
<dbReference type="InterPro" id="IPR046341">
    <property type="entry name" value="SET_dom_sf"/>
</dbReference>
<dbReference type="InterPro" id="IPR050331">
    <property type="entry name" value="Zinc_finger"/>
</dbReference>
<dbReference type="InterPro" id="IPR036236">
    <property type="entry name" value="Znf_C2H2_sf"/>
</dbReference>
<dbReference type="InterPro" id="IPR013087">
    <property type="entry name" value="Znf_C2H2_type"/>
</dbReference>
<dbReference type="PANTHER" id="PTHR16515:SF22">
    <property type="entry name" value="HISTONE-LYSINE N-METHYLTRANSFERASE PRDM6-RELATED"/>
    <property type="match status" value="1"/>
</dbReference>
<dbReference type="PANTHER" id="PTHR16515">
    <property type="entry name" value="PR DOMAIN ZINC FINGER PROTEIN"/>
    <property type="match status" value="1"/>
</dbReference>
<dbReference type="Pfam" id="PF21549">
    <property type="entry name" value="PRDM2_PR"/>
    <property type="match status" value="1"/>
</dbReference>
<dbReference type="Pfam" id="PF00096">
    <property type="entry name" value="zf-C2H2"/>
    <property type="match status" value="3"/>
</dbReference>
<dbReference type="SMART" id="SM00317">
    <property type="entry name" value="SET"/>
    <property type="match status" value="1"/>
</dbReference>
<dbReference type="SMART" id="SM00355">
    <property type="entry name" value="ZnF_C2H2"/>
    <property type="match status" value="4"/>
</dbReference>
<dbReference type="SUPFAM" id="SSF57667">
    <property type="entry name" value="beta-beta-alpha zinc fingers"/>
    <property type="match status" value="2"/>
</dbReference>
<dbReference type="SUPFAM" id="SSF82199">
    <property type="entry name" value="SET domain"/>
    <property type="match status" value="1"/>
</dbReference>
<dbReference type="PROSITE" id="PS50280">
    <property type="entry name" value="SET"/>
    <property type="match status" value="1"/>
</dbReference>
<dbReference type="PROSITE" id="PS00028">
    <property type="entry name" value="ZINC_FINGER_C2H2_1"/>
    <property type="match status" value="2"/>
</dbReference>
<dbReference type="PROSITE" id="PS50157">
    <property type="entry name" value="ZINC_FINGER_C2H2_2"/>
    <property type="match status" value="4"/>
</dbReference>
<keyword id="KW-0025">Alternative splicing</keyword>
<keyword id="KW-0156">Chromatin regulator</keyword>
<keyword id="KW-0225">Disease variant</keyword>
<keyword id="KW-0479">Metal-binding</keyword>
<keyword id="KW-0489">Methyltransferase</keyword>
<keyword id="KW-0539">Nucleus</keyword>
<keyword id="KW-1267">Proteomics identification</keyword>
<keyword id="KW-1185">Reference proteome</keyword>
<keyword id="KW-0677">Repeat</keyword>
<keyword id="KW-0678">Repressor</keyword>
<keyword id="KW-0949">S-adenosyl-L-methionine</keyword>
<keyword id="KW-0804">Transcription</keyword>
<keyword id="KW-0805">Transcription regulation</keyword>
<keyword id="KW-0808">Transferase</keyword>
<keyword id="KW-0862">Zinc</keyword>
<keyword id="KW-0863">Zinc-finger</keyword>
<evidence type="ECO:0000250" key="1">
    <source>
        <dbReference type="UniProtKB" id="Q3UZD5"/>
    </source>
</evidence>
<evidence type="ECO:0000255" key="2">
    <source>
        <dbReference type="PROSITE-ProRule" id="PRU00042"/>
    </source>
</evidence>
<evidence type="ECO:0000255" key="3">
    <source>
        <dbReference type="PROSITE-ProRule" id="PRU00190"/>
    </source>
</evidence>
<evidence type="ECO:0000256" key="4">
    <source>
        <dbReference type="SAM" id="MobiDB-lite"/>
    </source>
</evidence>
<evidence type="ECO:0000269" key="5">
    <source>
    </source>
</evidence>
<evidence type="ECO:0000303" key="6">
    <source>
    </source>
</evidence>
<evidence type="ECO:0000305" key="7"/>
<name>PRDM6_HUMAN</name>
<organism>
    <name type="scientific">Homo sapiens</name>
    <name type="common">Human</name>
    <dbReference type="NCBI Taxonomy" id="9606"/>
    <lineage>
        <taxon>Eukaryota</taxon>
        <taxon>Metazoa</taxon>
        <taxon>Chordata</taxon>
        <taxon>Craniata</taxon>
        <taxon>Vertebrata</taxon>
        <taxon>Euteleostomi</taxon>
        <taxon>Mammalia</taxon>
        <taxon>Eutheria</taxon>
        <taxon>Euarchontoglires</taxon>
        <taxon>Primates</taxon>
        <taxon>Haplorrhini</taxon>
        <taxon>Catarrhini</taxon>
        <taxon>Hominidae</taxon>
        <taxon>Homo</taxon>
    </lineage>
</organism>
<comment type="function">
    <text evidence="1">Putative histone methyltransferase that acts as a transcriptional repressor of smooth muscle gene expression. Promotes the transition from differentiated to proliferative smooth muscle by suppressing differentiation and maintaining the proliferative potential of vascular smooth muscle cells. Also plays a role in endothelial cells by inhibiting endothelial cell proliferation, survival and differentiation. It is unclear whether it has histone methyltransferase activity in vivo. According to some authors, it does not act as a histone methyltransferase by itself and represses transcription by recruiting EHMT2/G9a. According to others, it possesses histone methyltransferase activity when associated with other proteins and specifically methylates 'Lys-20' of histone H4 in vitro. 'Lys-20' methylation represents a specific tag for epigenetic transcriptional repression.</text>
</comment>
<comment type="catalytic activity">
    <reaction evidence="1">
        <text>L-lysyl(20)-[histone H4] + S-adenosyl-L-methionine = N(6)-methyl-L-lysyl(20)-[histone H4] + S-adenosyl-L-homocysteine + H(+)</text>
        <dbReference type="Rhea" id="RHEA:60344"/>
        <dbReference type="Rhea" id="RHEA-COMP:15554"/>
        <dbReference type="Rhea" id="RHEA-COMP:15555"/>
        <dbReference type="ChEBI" id="CHEBI:15378"/>
        <dbReference type="ChEBI" id="CHEBI:29969"/>
        <dbReference type="ChEBI" id="CHEBI:57856"/>
        <dbReference type="ChEBI" id="CHEBI:59789"/>
        <dbReference type="ChEBI" id="CHEBI:61929"/>
        <dbReference type="EC" id="2.1.1.361"/>
    </reaction>
</comment>
<comment type="subunit">
    <text evidence="1">Interacts with HDAC1, HDAC2, HDAC3, CBX1 and EP300.</text>
</comment>
<comment type="interaction">
    <interactant intactId="EBI-11320284">
        <id>Q9NQX0</id>
    </interactant>
    <interactant intactId="EBI-11096309">
        <id>Q9NYB9-2</id>
        <label>ABI2</label>
    </interactant>
    <organismsDiffer>false</organismsDiffer>
    <experiments>3</experiments>
</comment>
<comment type="interaction">
    <interactant intactId="EBI-11320284">
        <id>Q9NQX0</id>
    </interactant>
    <interactant intactId="EBI-727098">
        <id>P21549</id>
        <label>AGXT</label>
    </interactant>
    <organismsDiffer>false</organismsDiffer>
    <experiments>3</experiments>
</comment>
<comment type="interaction">
    <interactant intactId="EBI-11320284">
        <id>Q9NQX0</id>
    </interactant>
    <interactant intactId="EBI-2371423">
        <id>O43865</id>
        <label>AHCYL1</label>
    </interactant>
    <organismsDiffer>false</organismsDiffer>
    <experiments>3</experiments>
</comment>
<comment type="interaction">
    <interactant intactId="EBI-11320284">
        <id>Q9NQX0</id>
    </interactant>
    <interactant intactId="EBI-8643161">
        <id>Q9NX04</id>
        <label>AIRIM</label>
    </interactant>
    <organismsDiffer>false</organismsDiffer>
    <experiments>3</experiments>
</comment>
<comment type="interaction">
    <interactant intactId="EBI-11320284">
        <id>Q9NQX0</id>
    </interactant>
    <interactant intactId="EBI-11954519">
        <id>Q49AR9</id>
        <label>ANKS1A</label>
    </interactant>
    <organismsDiffer>false</organismsDiffer>
    <experiments>3</experiments>
</comment>
<comment type="interaction">
    <interactant intactId="EBI-11320284">
        <id>Q9NQX0</id>
    </interactant>
    <interactant intactId="EBI-745213">
        <id>P29972</id>
        <label>AQP1</label>
    </interactant>
    <organismsDiffer>false</organismsDiffer>
    <experiments>3</experiments>
</comment>
<comment type="interaction">
    <interactant intactId="EBI-11320284">
        <id>Q9NQX0</id>
    </interactant>
    <interactant intactId="EBI-948603">
        <id>Q03989</id>
        <label>ARID5A</label>
    </interactant>
    <organismsDiffer>false</organismsDiffer>
    <experiments>3</experiments>
</comment>
<comment type="interaction">
    <interactant intactId="EBI-11320284">
        <id>Q9NQX0</id>
    </interactant>
    <interactant intactId="EBI-745689">
        <id>Q7L5A3</id>
        <label>ATOSB</label>
    </interactant>
    <organismsDiffer>false</organismsDiffer>
    <experiments>3</experiments>
</comment>
<comment type="interaction">
    <interactant intactId="EBI-11320284">
        <id>Q9NQX0</id>
    </interactant>
    <interactant intactId="EBI-1166928">
        <id>Q8N5M1</id>
        <label>ATPAF2</label>
    </interactant>
    <organismsDiffer>false</organismsDiffer>
    <experiments>3</experiments>
</comment>
<comment type="interaction">
    <interactant intactId="EBI-11320284">
        <id>Q9NQX0</id>
    </interactant>
    <interactant intactId="EBI-747185">
        <id>O95817</id>
        <label>BAG3</label>
    </interactant>
    <organismsDiffer>false</organismsDiffer>
    <experiments>3</experiments>
</comment>
<comment type="interaction">
    <interactant intactId="EBI-11320284">
        <id>Q9NQX0</id>
    </interactant>
    <interactant intactId="EBI-11977289">
        <id>Q9H503-2</id>
        <label>BANF2</label>
    </interactant>
    <organismsDiffer>false</organismsDiffer>
    <experiments>3</experiments>
</comment>
<comment type="interaction">
    <interactant intactId="EBI-11320284">
        <id>Q9NQX0</id>
    </interactant>
    <interactant intactId="EBI-11524452">
        <id>Q8N9N5-2</id>
        <label>BANP</label>
    </interactant>
    <organismsDiffer>false</organismsDiffer>
    <experiments>3</experiments>
</comment>
<comment type="interaction">
    <interactant intactId="EBI-11320284">
        <id>Q9NQX0</id>
    </interactant>
    <interactant intactId="EBI-11954144">
        <id>O43439-4</id>
        <label>CBFA2T2</label>
    </interactant>
    <organismsDiffer>false</organismsDiffer>
    <experiments>3</experiments>
</comment>
<comment type="interaction">
    <interactant intactId="EBI-11320284">
        <id>Q9NQX0</id>
    </interactant>
    <interactant intactId="EBI-712912">
        <id>Q9HC52</id>
        <label>CBX8</label>
    </interactant>
    <organismsDiffer>false</organismsDiffer>
    <experiments>3</experiments>
</comment>
<comment type="interaction">
    <interactant intactId="EBI-11320284">
        <id>Q9NQX0</id>
    </interactant>
    <interactant intactId="EBI-744556">
        <id>Q96HB5</id>
        <label>CCDC120</label>
    </interactant>
    <organismsDiffer>false</organismsDiffer>
    <experiments>3</experiments>
</comment>
<comment type="interaction">
    <interactant intactId="EBI-11320284">
        <id>Q9NQX0</id>
    </interactant>
    <interactant intactId="EBI-10961624">
        <id>Q2TAC2-2</id>
        <label>CCDC57</label>
    </interactant>
    <organismsDiffer>false</organismsDiffer>
    <experiments>3</experiments>
</comment>
<comment type="interaction">
    <interactant intactId="EBI-11320284">
        <id>Q9NQX0</id>
    </interactant>
    <interactant intactId="EBI-10175300">
        <id>Q8TD31-3</id>
        <label>CCHCR1</label>
    </interactant>
    <organismsDiffer>false</organismsDiffer>
    <experiments>3</experiments>
</comment>
<comment type="interaction">
    <interactant intactId="EBI-11320284">
        <id>Q9NQX0</id>
    </interactant>
    <interactant intactId="EBI-2836773">
        <id>Q9UK58</id>
        <label>CCNL1</label>
    </interactant>
    <organismsDiffer>false</organismsDiffer>
    <experiments>3</experiments>
</comment>
<comment type="interaction">
    <interactant intactId="EBI-11320284">
        <id>Q9NQX0</id>
    </interactant>
    <interactant intactId="EBI-1104570">
        <id>Q8IYX8</id>
        <label>CEP57L1</label>
    </interactant>
    <organismsDiffer>false</organismsDiffer>
    <experiments>3</experiments>
</comment>
<comment type="interaction">
    <interactant intactId="EBI-11320284">
        <id>Q9NQX0</id>
    </interactant>
    <interactant intactId="EBI-1053725">
        <id>P10606</id>
        <label>COX5B</label>
    </interactant>
    <organismsDiffer>false</organismsDiffer>
    <experiments>3</experiments>
</comment>
<comment type="interaction">
    <interactant intactId="EBI-11320284">
        <id>Q9NQX0</id>
    </interactant>
    <interactant intactId="EBI-711360">
        <id>P33240</id>
        <label>CSTF2</label>
    </interactant>
    <organismsDiffer>false</organismsDiffer>
    <experiments>3</experiments>
</comment>
<comment type="interaction">
    <interactant intactId="EBI-11320284">
        <id>Q9NQX0</id>
    </interactant>
    <interactant intactId="EBI-742350">
        <id>Q14241</id>
        <label>ELOA</label>
    </interactant>
    <organismsDiffer>false</organismsDiffer>
    <experiments>3</experiments>
</comment>
<comment type="interaction">
    <interactant intactId="EBI-11320284">
        <id>Q9NQX0</id>
    </interactant>
    <interactant intactId="EBI-744099">
        <id>Q9H0I2</id>
        <label>ENKD1</label>
    </interactant>
    <organismsDiffer>false</organismsDiffer>
    <experiments>3</experiments>
</comment>
<comment type="interaction">
    <interactant intactId="EBI-11320284">
        <id>Q9NQX0</id>
    </interactant>
    <interactant intactId="EBI-371876">
        <id>Q9NQT4</id>
        <label>EXOSC5</label>
    </interactant>
    <organismsDiffer>false</organismsDiffer>
    <experiments>3</experiments>
</comment>
<comment type="interaction">
    <interactant intactId="EBI-11320284">
        <id>Q9NQX0</id>
    </interactant>
    <interactant intactId="EBI-6658203">
        <id>Q86YD7</id>
        <label>FAM90A1</label>
    </interactant>
    <organismsDiffer>false</organismsDiffer>
    <experiments>3</experiments>
</comment>
<comment type="interaction">
    <interactant intactId="EBI-11320284">
        <id>Q9NQX0</id>
    </interactant>
    <interactant intactId="EBI-701903">
        <id>Q14192</id>
        <label>FHL2</label>
    </interactant>
    <organismsDiffer>false</organismsDiffer>
    <experiments>3</experiments>
</comment>
<comment type="interaction">
    <interactant intactId="EBI-11320284">
        <id>Q9NQX0</id>
    </interactant>
    <interactant intactId="EBI-11320806">
        <id>Q9NU39</id>
        <label>FOXD4L1</label>
    </interactant>
    <organismsDiffer>false</organismsDiffer>
    <experiments>3</experiments>
</comment>
<comment type="interaction">
    <interactant intactId="EBI-11320284">
        <id>Q9NQX0</id>
    </interactant>
    <interactant intactId="EBI-725515">
        <id>O43559</id>
        <label>FRS3</label>
    </interactant>
    <organismsDiffer>false</organismsDiffer>
    <experiments>3</experiments>
</comment>
<comment type="interaction">
    <interactant intactId="EBI-11320284">
        <id>Q9NQX0</id>
    </interactant>
    <interactant intactId="EBI-18138793">
        <id>Q9C0B1-2</id>
        <label>FTO</label>
    </interactant>
    <organismsDiffer>false</organismsDiffer>
    <experiments>3</experiments>
</comment>
<comment type="interaction">
    <interactant intactId="EBI-11320284">
        <id>Q9NQX0</id>
    </interactant>
    <interactant intactId="EBI-372506">
        <id>Q8TAE8</id>
        <label>GADD45GIP1</label>
    </interactant>
    <organismsDiffer>false</organismsDiffer>
    <experiments>3</experiments>
</comment>
<comment type="interaction">
    <interactant intactId="EBI-11320284">
        <id>Q9NQX0</id>
    </interactant>
    <interactant intactId="EBI-744104">
        <id>P55040</id>
        <label>GEM</label>
    </interactant>
    <organismsDiffer>false</organismsDiffer>
    <experiments>3</experiments>
</comment>
<comment type="interaction">
    <interactant intactId="EBI-11320284">
        <id>Q9NQX0</id>
    </interactant>
    <interactant intactId="EBI-751540">
        <id>O95872</id>
        <label>GPANK1</label>
    </interactant>
    <organismsDiffer>false</organismsDiffer>
    <experiments>3</experiments>
</comment>
<comment type="interaction">
    <interactant intactId="EBI-11320284">
        <id>Q9NQX0</id>
    </interactant>
    <interactant intactId="EBI-5235612">
        <id>A8MXD5</id>
        <label>GRXCR1</label>
    </interactant>
    <organismsDiffer>false</organismsDiffer>
    <experiments>3</experiments>
</comment>
<comment type="interaction">
    <interactant intactId="EBI-11320284">
        <id>Q9NQX0</id>
    </interactant>
    <interactant intactId="EBI-1752118">
        <id>P31273</id>
        <label>HOXC8</label>
    </interactant>
    <organismsDiffer>false</organismsDiffer>
    <experiments>3</experiments>
</comment>
<comment type="interaction">
    <interactant intactId="EBI-11320284">
        <id>Q9NQX0</id>
    </interactant>
    <interactant intactId="EBI-17178971">
        <id>Q14005-2</id>
        <label>IL16</label>
    </interactant>
    <organismsDiffer>false</organismsDiffer>
    <experiments>3</experiments>
</comment>
<comment type="interaction">
    <interactant intactId="EBI-11320284">
        <id>Q9NQX0</id>
    </interactant>
    <interactant intactId="EBI-10220600">
        <id>Q8NA54</id>
        <label>IQUB</label>
    </interactant>
    <organismsDiffer>false</organismsDiffer>
    <experiments>3</experiments>
</comment>
<comment type="interaction">
    <interactant intactId="EBI-11320284">
        <id>Q9NQX0</id>
    </interactant>
    <interactant intactId="EBI-2556193">
        <id>Q63ZY3</id>
        <label>KANK2</label>
    </interactant>
    <organismsDiffer>false</organismsDiffer>
    <experiments>3</experiments>
</comment>
<comment type="interaction">
    <interactant intactId="EBI-11320284">
        <id>Q9NQX0</id>
    </interactant>
    <interactant intactId="EBI-399080">
        <id>Q92993</id>
        <label>KAT5</label>
    </interactant>
    <organismsDiffer>false</organismsDiffer>
    <experiments>3</experiments>
</comment>
<comment type="interaction">
    <interactant intactId="EBI-11320284">
        <id>Q9NQX0</id>
    </interactant>
    <interactant intactId="EBI-4397613">
        <id>Q7L273</id>
        <label>KCTD9</label>
    </interactant>
    <organismsDiffer>false</organismsDiffer>
    <experiments>3</experiments>
</comment>
<comment type="interaction">
    <interactant intactId="EBI-11320284">
        <id>Q9NQX0</id>
    </interactant>
    <interactant intactId="EBI-14069005">
        <id>Q9BVG8-5</id>
        <label>KIFC3</label>
    </interactant>
    <organismsDiffer>false</organismsDiffer>
    <experiments>3</experiments>
</comment>
<comment type="interaction">
    <interactant intactId="EBI-11320284">
        <id>Q9NQX0</id>
    </interactant>
    <interactant intactId="EBI-8639312">
        <id>P25800</id>
        <label>LMO1</label>
    </interactant>
    <organismsDiffer>false</organismsDiffer>
    <experiments>3</experiments>
</comment>
<comment type="interaction">
    <interactant intactId="EBI-11320284">
        <id>Q9NQX0</id>
    </interactant>
    <interactant intactId="EBI-11959475">
        <id>P25791-3</id>
        <label>LMO2</label>
    </interactant>
    <organismsDiffer>false</organismsDiffer>
    <experiments>3</experiments>
</comment>
<comment type="interaction">
    <interactant intactId="EBI-11320284">
        <id>Q9NQX0</id>
    </interactant>
    <interactant intactId="EBI-2341787">
        <id>Q17RB8</id>
        <label>LONRF1</label>
    </interactant>
    <organismsDiffer>false</organismsDiffer>
    <experiments>3</experiments>
</comment>
<comment type="interaction">
    <interactant intactId="EBI-11320284">
        <id>Q9NQX0</id>
    </interactant>
    <interactant intactId="EBI-5662487">
        <id>Q8TDC0</id>
        <label>MYOZ3</label>
    </interactant>
    <organismsDiffer>false</organismsDiffer>
    <experiments>3</experiments>
</comment>
<comment type="interaction">
    <interactant intactId="EBI-11320284">
        <id>Q9NQX0</id>
    </interactant>
    <interactant intactId="EBI-713635">
        <id>O43639</id>
        <label>NCK2</label>
    </interactant>
    <organismsDiffer>false</organismsDiffer>
    <experiments>3</experiments>
</comment>
<comment type="interaction">
    <interactant intactId="EBI-11320284">
        <id>Q9NQX0</id>
    </interactant>
    <interactant intactId="EBI-11750983">
        <id>Q9HC98-4</id>
        <label>NEK6</label>
    </interactant>
    <organismsDiffer>false</organismsDiffer>
    <experiments>3</experiments>
</comment>
<comment type="interaction">
    <interactant intactId="EBI-11320284">
        <id>Q9NQX0</id>
    </interactant>
    <interactant intactId="EBI-10271199">
        <id>Q8NI38</id>
        <label>NFKBID</label>
    </interactant>
    <organismsDiffer>false</organismsDiffer>
    <experiments>3</experiments>
</comment>
<comment type="interaction">
    <interactant intactId="EBI-11320284">
        <id>Q9NQX0</id>
    </interactant>
    <interactant intactId="EBI-11022007">
        <id>Q9HBE1-4</id>
        <label>PATZ1</label>
    </interactant>
    <organismsDiffer>false</organismsDiffer>
    <experiments>3</experiments>
</comment>
<comment type="interaction">
    <interactant intactId="EBI-11320284">
        <id>Q9NQX0</id>
    </interactant>
    <interactant intactId="EBI-10232538">
        <id>Q8WWB5</id>
        <label>PIH1D2</label>
    </interactant>
    <organismsDiffer>false</organismsDiffer>
    <experiments>3</experiments>
</comment>
<comment type="interaction">
    <interactant intactId="EBI-11320284">
        <id>Q9NQX0</id>
    </interactant>
    <interactant intactId="EBI-11320284">
        <id>Q9NQX0</id>
        <label>PRDM6</label>
    </interactant>
    <organismsDiffer>false</organismsDiffer>
    <experiments>3</experiments>
</comment>
<comment type="interaction">
    <interactant intactId="EBI-11320284">
        <id>Q9NQX0</id>
    </interactant>
    <interactant intactId="EBI-1383852">
        <id>P54646</id>
        <label>PRKAA2</label>
    </interactant>
    <organismsDiffer>false</organismsDiffer>
    <experiments>3</experiments>
</comment>
<comment type="interaction">
    <interactant intactId="EBI-11320284">
        <id>Q9NQX0</id>
    </interactant>
    <interactant intactId="EBI-1383632">
        <id>Q13882</id>
        <label>PTK6</label>
    </interactant>
    <organismsDiffer>false</organismsDiffer>
    <experiments>3</experiments>
</comment>
<comment type="interaction">
    <interactant intactId="EBI-11320284">
        <id>Q9NQX0</id>
    </interactant>
    <interactant intactId="EBI-347462">
        <id>P47897</id>
        <label>QARS1</label>
    </interactant>
    <organismsDiffer>false</organismsDiffer>
    <experiments>3</experiments>
</comment>
<comment type="interaction">
    <interactant intactId="EBI-11320284">
        <id>Q9NQX0</id>
    </interactant>
    <interactant intactId="EBI-1055693">
        <id>O75771</id>
        <label>RAD51D</label>
    </interactant>
    <organismsDiffer>false</organismsDiffer>
    <experiments>3</experiments>
</comment>
<comment type="interaction">
    <interactant intactId="EBI-11320284">
        <id>Q9NQX0</id>
    </interactant>
    <interactant intactId="EBI-1378139">
        <id>Q9HAT0</id>
        <label>ROPN1</label>
    </interactant>
    <organismsDiffer>false</organismsDiffer>
    <experiments>3</experiments>
</comment>
<comment type="interaction">
    <interactant intactId="EBI-11320284">
        <id>Q9NQX0</id>
    </interactant>
    <interactant intactId="EBI-11984663">
        <id>Q06455-2</id>
        <label>RUNX1T1</label>
    </interactant>
    <organismsDiffer>false</organismsDiffer>
    <experiments>3</experiments>
</comment>
<comment type="interaction">
    <interactant intactId="EBI-11320284">
        <id>Q9NQX0</id>
    </interactant>
    <interactant intactId="EBI-11986417">
        <id>Q9UPU9-3</id>
        <label>SAMD4A</label>
    </interactant>
    <organismsDiffer>false</organismsDiffer>
    <experiments>3</experiments>
</comment>
<comment type="interaction">
    <interactant intactId="EBI-11320284">
        <id>Q9NQX0</id>
    </interactant>
    <interactant intactId="EBI-749295">
        <id>O75716</id>
        <label>STK16</label>
    </interactant>
    <organismsDiffer>false</organismsDiffer>
    <experiments>3</experiments>
</comment>
<comment type="interaction">
    <interactant intactId="EBI-11320284">
        <id>Q9NQX0</id>
    </interactant>
    <interactant intactId="EBI-11974855">
        <id>Q9Y4C2-2</id>
        <label>TCAF1</label>
    </interactant>
    <organismsDiffer>false</organismsDiffer>
    <experiments>3</experiments>
</comment>
<comment type="interaction">
    <interactant intactId="EBI-11320284">
        <id>Q9NQX0</id>
    </interactant>
    <interactant intactId="EBI-750487">
        <id>Q8WW24</id>
        <label>TEKT4</label>
    </interactant>
    <organismsDiffer>false</organismsDiffer>
    <experiments>3</experiments>
</comment>
<comment type="interaction">
    <interactant intactId="EBI-11320284">
        <id>Q9NQX0</id>
    </interactant>
    <interactant intactId="EBI-11741437">
        <id>Q08117-2</id>
        <label>TLE5</label>
    </interactant>
    <organismsDiffer>false</organismsDiffer>
    <experiments>3</experiments>
</comment>
<comment type="interaction">
    <interactant intactId="EBI-11320284">
        <id>Q9NQX0</id>
    </interactant>
    <interactant intactId="EBI-2820256">
        <id>Q14142</id>
        <label>TRIM14</label>
    </interactant>
    <organismsDiffer>false</organismsDiffer>
    <experiments>3</experiments>
</comment>
<comment type="interaction">
    <interactant intactId="EBI-11320284">
        <id>Q9NQX0</id>
    </interactant>
    <interactant intactId="EBI-10242598">
        <id>Q53H54</id>
        <label>TRMT12</label>
    </interactant>
    <organismsDiffer>false</organismsDiffer>
    <experiments>3</experiments>
</comment>
<comment type="interaction">
    <interactant intactId="EBI-11320284">
        <id>Q9NQX0</id>
    </interactant>
    <interactant intactId="EBI-744794">
        <id>Q9BZW7</id>
        <label>TSGA10</label>
    </interactant>
    <organismsDiffer>false</organismsDiffer>
    <experiments>3</experiments>
</comment>
<comment type="interaction">
    <interactant intactId="EBI-11320284">
        <id>Q9NQX0</id>
    </interactant>
    <interactant intactId="EBI-10241197">
        <id>Q3SY00</id>
        <label>TSGA10IP</label>
    </interactant>
    <organismsDiffer>false</organismsDiffer>
    <experiments>3</experiments>
</comment>
<comment type="interaction">
    <interactant intactId="EBI-11320284">
        <id>Q9NQX0</id>
    </interactant>
    <interactant intactId="EBI-3918381">
        <id>Q96PN8</id>
        <label>TSSK3</label>
    </interactant>
    <organismsDiffer>false</organismsDiffer>
    <experiments>3</experiments>
</comment>
<comment type="interaction">
    <interactant intactId="EBI-11320284">
        <id>Q9NQX0</id>
    </interactant>
    <interactant intactId="EBI-9090990">
        <id>Q5W5X9-3</id>
        <label>TTC23</label>
    </interactant>
    <organismsDiffer>false</organismsDiffer>
    <experiments>3</experiments>
</comment>
<comment type="interaction">
    <interactant intactId="EBI-11320284">
        <id>Q9NQX0</id>
    </interactant>
    <interactant intactId="EBI-7353612">
        <id>P57075-2</id>
        <label>UBASH3A</label>
    </interactant>
    <organismsDiffer>false</organismsDiffer>
    <experiments>3</experiments>
</comment>
<comment type="interaction">
    <interactant intactId="EBI-11320284">
        <id>Q9NQX0</id>
    </interactant>
    <interactant intactId="EBI-11975223">
        <id>Q70EL1-9</id>
        <label>USP54</label>
    </interactant>
    <organismsDiffer>false</organismsDiffer>
    <experiments>3</experiments>
</comment>
<comment type="interaction">
    <interactant intactId="EBI-11320284">
        <id>Q9NQX0</id>
    </interactant>
    <interactant intactId="EBI-8656416">
        <id>Q68DK2-5</id>
        <label>ZFYVE26</label>
    </interactant>
    <organismsDiffer>false</organismsDiffer>
    <experiments>3</experiments>
</comment>
<comment type="subcellular location">
    <subcellularLocation>
        <location evidence="1">Nucleus</location>
    </subcellularLocation>
</comment>
<comment type="alternative products">
    <event type="alternative splicing"/>
    <isoform>
        <id>Q9NQX0-3</id>
        <name>1</name>
        <sequence type="displayed"/>
    </isoform>
    <isoform>
        <id>Q9NQX0-2</id>
        <name>2</name>
        <name>B</name>
        <sequence type="described" ref="VSP_036348 VSP_006929"/>
    </isoform>
    <isoform>
        <id>Q9NQX0-1</id>
        <name>3</name>
        <name>A</name>
        <sequence type="described" ref="VSP_036348"/>
    </isoform>
</comment>
<comment type="disease" evidence="5">
    <disease id="DI-04763">
        <name>Patent ductus arteriosus 3</name>
        <acronym>PDA3</acronym>
        <description>A congenital heart defect characterized by the persistent opening of fetal ductus arteriosus that fails to close after birth. Fetal ductus arteriosus connects the pulmonary artery to the descending aorta, allowing unoxygenated blood to bypass the lung and flow to the placenta. Normally, the ductus occludes shortly after birth.</description>
        <dbReference type="MIM" id="617039"/>
    </disease>
    <text>The disease is caused by variants affecting the gene represented in this entry.</text>
</comment>
<comment type="similarity">
    <text evidence="3">Belongs to the class V-like SAM-binding methyltransferase superfamily.</text>
</comment>
<comment type="sequence caution" evidence="7">
    <conflict type="erroneous initiation">
        <sequence resource="EMBL-CDS" id="AAF78078"/>
    </conflict>
</comment>
<comment type="sequence caution" evidence="7">
    <conflict type="erroneous initiation">
        <sequence resource="EMBL-CDS" id="AAF78079"/>
    </conflict>
</comment>
<feature type="chain" id="PRO_0000047762" description="Putative histone-lysine N-methyltransferase PRDM6">
    <location>
        <begin position="1"/>
        <end position="595"/>
    </location>
</feature>
<feature type="domain" description="SET" evidence="3">
    <location>
        <begin position="246"/>
        <end position="365"/>
    </location>
</feature>
<feature type="zinc finger region" description="C2H2-type 1; degenerate" evidence="2">
    <location>
        <begin position="473"/>
        <end position="495"/>
    </location>
</feature>
<feature type="zinc finger region" description="C2H2-type 2" evidence="2">
    <location>
        <begin position="501"/>
        <end position="523"/>
    </location>
</feature>
<feature type="zinc finger region" description="C2H2-type 3" evidence="2">
    <location>
        <begin position="529"/>
        <end position="551"/>
    </location>
</feature>
<feature type="zinc finger region" description="C2H2-type 4; degenerate" evidence="2">
    <location>
        <begin position="557"/>
        <end position="579"/>
    </location>
</feature>
<feature type="region of interest" description="Disordered" evidence="4">
    <location>
        <begin position="27"/>
        <end position="90"/>
    </location>
</feature>
<feature type="compositionally biased region" description="Gly residues" evidence="4">
    <location>
        <begin position="30"/>
        <end position="40"/>
    </location>
</feature>
<feature type="compositionally biased region" description="Pro residues" evidence="4">
    <location>
        <begin position="49"/>
        <end position="59"/>
    </location>
</feature>
<feature type="compositionally biased region" description="Low complexity" evidence="4">
    <location>
        <begin position="71"/>
        <end position="90"/>
    </location>
</feature>
<feature type="splice variant" id="VSP_036348" description="In isoform 2 and isoform 3." evidence="6">
    <location>
        <begin position="1"/>
        <end position="182"/>
    </location>
</feature>
<feature type="splice variant" id="VSP_006929" description="In isoform 2." evidence="6">
    <location>
        <begin position="314"/>
        <end position="595"/>
    </location>
</feature>
<feature type="sequence variant" id="VAR_077014" description="In PDA3; uncertain significance; dbSNP:rs879255279." evidence="5">
    <original>C</original>
    <variation>S</variation>
    <location>
        <position position="263"/>
    </location>
</feature>
<feature type="sequence variant" id="VAR_077015" description="In PDA3; dbSNP:rs879253872." evidence="5">
    <original>Q</original>
    <variation>R</variation>
    <location>
        <position position="462"/>
    </location>
</feature>
<feature type="sequence variant" id="VAR_077016" description="In PDA3; dbSNP:rs879255278." evidence="5">
    <original>R</original>
    <variation>Q</variation>
    <location>
        <position position="549"/>
    </location>
</feature>
<proteinExistence type="evidence at protein level"/>
<sequence length="595" mass="64452">MLKPGDPGGSAFLKVDPAYLQHWQQLFPHGGAGPLKGSGAAGLLSAPQPLQPPPPPPPPERAEPPPDSLRPRPASLSSASSTPASSSTSASSASSCAAAAAAAALAGLSALPVSQLPVFAPLAAAAVAAEPLPPKELCLGATSGPGPVKCGGGGGGGGEGRGAPRFRCSAEELDYYLYGQQRMEIIPLNQHTSDPNNRCDMCADNRNGECPMHGPLHSLRRLVGTSSAAAAAPPPELPEWLRDLPREVCLCTSTVPGLAYGICAAQRIQQGTWIGPFQGVLLPPEKVQAGAVRNTQHLWEIYDQDGTLQHFIDGGEPSKSSWMRYIRCARHCGEQNLTVVQYRSNIFYRACIDIPRGTELLVWYNDSYTSFFGIPLQCIAQDENLNVPSTVMEAMCRQDALQPFNKSSKLAPTTQQRSVVFPQTPCSRNFSLLDKSGPIESGFNQINVKNQRVLASPTSTSQLHSEFSDWHLWKCGQCFKTFTQRILLQMHVCTQNPDRPYQCGHCSQSFSQPSELRNHVVTHSSDRPFKCGYCGRAFAGATTLNNHIRTHTGEKPFKCERCERSFTQATQLSRHQRMPNECKPITESPESIEVD</sequence>
<reference key="1">
    <citation type="journal article" date="2000" name="Histol. Histopathol.">
        <title>The yin-yang of PR-domain family genes in tumorigenesis.</title>
        <authorList>
            <person name="Jiang G.L."/>
            <person name="Huang S."/>
        </authorList>
    </citation>
    <scope>NUCLEOTIDE SEQUENCE [MRNA] (ISOFORMS 2 AND 3)</scope>
</reference>
<reference key="2">
    <citation type="journal article" date="2004" name="Nature">
        <title>The DNA sequence and comparative analysis of human chromosome 5.</title>
        <authorList>
            <person name="Schmutz J."/>
            <person name="Martin J."/>
            <person name="Terry A."/>
            <person name="Couronne O."/>
            <person name="Grimwood J."/>
            <person name="Lowry S."/>
            <person name="Gordon L.A."/>
            <person name="Scott D."/>
            <person name="Xie G."/>
            <person name="Huang W."/>
            <person name="Hellsten U."/>
            <person name="Tran-Gyamfi M."/>
            <person name="She X."/>
            <person name="Prabhakar S."/>
            <person name="Aerts A."/>
            <person name="Altherr M."/>
            <person name="Bajorek E."/>
            <person name="Black S."/>
            <person name="Branscomb E."/>
            <person name="Caoile C."/>
            <person name="Challacombe J.F."/>
            <person name="Chan Y.M."/>
            <person name="Denys M."/>
            <person name="Detter J.C."/>
            <person name="Escobar J."/>
            <person name="Flowers D."/>
            <person name="Fotopulos D."/>
            <person name="Glavina T."/>
            <person name="Gomez M."/>
            <person name="Gonzales E."/>
            <person name="Goodstein D."/>
            <person name="Grigoriev I."/>
            <person name="Groza M."/>
            <person name="Hammon N."/>
            <person name="Hawkins T."/>
            <person name="Haydu L."/>
            <person name="Israni S."/>
            <person name="Jett J."/>
            <person name="Kadner K."/>
            <person name="Kimball H."/>
            <person name="Kobayashi A."/>
            <person name="Lopez F."/>
            <person name="Lou Y."/>
            <person name="Martinez D."/>
            <person name="Medina C."/>
            <person name="Morgan J."/>
            <person name="Nandkeshwar R."/>
            <person name="Noonan J.P."/>
            <person name="Pitluck S."/>
            <person name="Pollard M."/>
            <person name="Predki P."/>
            <person name="Priest J."/>
            <person name="Ramirez L."/>
            <person name="Retterer J."/>
            <person name="Rodriguez A."/>
            <person name="Rogers S."/>
            <person name="Salamov A."/>
            <person name="Salazar A."/>
            <person name="Thayer N."/>
            <person name="Tice H."/>
            <person name="Tsai M."/>
            <person name="Ustaszewska A."/>
            <person name="Vo N."/>
            <person name="Wheeler J."/>
            <person name="Wu K."/>
            <person name="Yang J."/>
            <person name="Dickson M."/>
            <person name="Cheng J.-F."/>
            <person name="Eichler E.E."/>
            <person name="Olsen A."/>
            <person name="Pennacchio L.A."/>
            <person name="Rokhsar D.S."/>
            <person name="Richardson P."/>
            <person name="Lucas S.M."/>
            <person name="Myers R.M."/>
            <person name="Rubin E.M."/>
        </authorList>
    </citation>
    <scope>NUCLEOTIDE SEQUENCE [LARGE SCALE GENOMIC DNA]</scope>
</reference>
<reference key="3">
    <citation type="journal article" date="2016" name="Am. J. Hum. Genet.">
        <title>Mutations in the histone modifier PRDM6 are associated with isolated nonsyndromic patent ductus arteriosus.</title>
        <authorList>
            <person name="Li N."/>
            <person name="Subrahmanyan L."/>
            <person name="Smith E."/>
            <person name="Yu X."/>
            <person name="Zaidi S."/>
            <person name="Choi M."/>
            <person name="Mane S."/>
            <person name="Nelson-Williams C."/>
            <person name="Bahjati M."/>
            <person name="Kazemi M."/>
            <person name="Hashemi M."/>
            <person name="Fathzadeh M."/>
            <person name="Narayanan A."/>
            <person name="Tian L."/>
            <person name="Montazeri F."/>
            <person name="Mani M."/>
            <person name="Begleiter M.L."/>
            <person name="Coon B.G."/>
            <person name="Lynch H.T."/>
            <person name="Olson E.N."/>
            <person name="Zhao H."/>
            <person name="Ruland J."/>
            <person name="Lifton R.P."/>
            <person name="Mani A."/>
        </authorList>
    </citation>
    <scope>INVOLVEMENT IN PDA3</scope>
    <scope>VARIANTS PDA3 SER-263; ARG-462 AND GLN-549</scope>
</reference>